<reference key="1">
    <citation type="journal article" date="2005" name="J. Bacteriol.">
        <title>Structure and genome organization of AFV2, a novel archaeal lipothrixvirus with unusual terminal and core structures.</title>
        <authorList>
            <person name="Haring M."/>
            <person name="Vestergaard G."/>
            <person name="Brugger K."/>
            <person name="Rachel R."/>
            <person name="Garrett R.A."/>
            <person name="Prangishvili D."/>
        </authorList>
    </citation>
    <scope>NUCLEOTIDE SEQUENCE [GENOMIC DNA]</scope>
</reference>
<evidence type="ECO:0000256" key="1">
    <source>
        <dbReference type="SAM" id="MobiDB-lite"/>
    </source>
</evidence>
<keyword id="KW-1185">Reference proteome</keyword>
<feature type="chain" id="PRO_0000384515" description="Uncharacterized protein ORF180">
    <location>
        <begin position="1"/>
        <end position="180"/>
    </location>
</feature>
<feature type="region of interest" description="Disordered" evidence="1">
    <location>
        <begin position="138"/>
        <end position="180"/>
    </location>
</feature>
<feature type="compositionally biased region" description="Polar residues" evidence="1">
    <location>
        <begin position="145"/>
        <end position="154"/>
    </location>
</feature>
<feature type="compositionally biased region" description="Basic and acidic residues" evidence="1">
    <location>
        <begin position="159"/>
        <end position="169"/>
    </location>
</feature>
<organism>
    <name type="scientific">Acidianus filamentous virus 2 (isolate Italy/Pozzuoli)</name>
    <name type="common">AFV-2</name>
    <dbReference type="NCBI Taxonomy" id="654910"/>
    <lineage>
        <taxon>Viruses</taxon>
        <taxon>Adnaviria</taxon>
        <taxon>Zilligvirae</taxon>
        <taxon>Taleaviricota</taxon>
        <taxon>Tokiviricetes</taxon>
        <taxon>Ligamenvirales</taxon>
        <taxon>Lipothrixviridae</taxon>
        <taxon>Deltalipothrixvirus</taxon>
        <taxon>Acidianus filamentous virus 2</taxon>
    </lineage>
</organism>
<sequence>MADKITLWTDLVSELRKKLTKKEMATLQEIIDENGSIEDVIVTLVRKAVNPDLLSISDIELCMQKAIKIGAYVTATGGGSPRSNDNMPSQIAREVVEEAYGGSPEQQQQQNPLQNMMKQMADAISTAIMSEVSSKLKSVMPVPMPQQNSDNGSTPHIVDSSKSKDKSSNDGDNGVFTGDE</sequence>
<protein>
    <recommendedName>
        <fullName>Uncharacterized protein ORF180</fullName>
    </recommendedName>
</protein>
<proteinExistence type="predicted"/>
<accession>Q573D9</accession>
<dbReference type="EMBL" id="AJ854042">
    <property type="protein sequence ID" value="CAH69417.1"/>
    <property type="molecule type" value="Genomic_DNA"/>
</dbReference>
<dbReference type="RefSeq" id="YP_001496955.1">
    <property type="nucleotide sequence ID" value="NC_009884.1"/>
</dbReference>
<dbReference type="SMR" id="Q573D9"/>
<dbReference type="KEGG" id="vg:5656073"/>
<dbReference type="Proteomes" id="UP000006364">
    <property type="component" value="Genome"/>
</dbReference>
<name>Y180_AFV2P</name>
<gene>
    <name type="ORF">ORF180</name>
</gene>
<organismHost>
    <name type="scientific">Acidianus sp. F28</name>
    <dbReference type="NCBI Taxonomy" id="315458"/>
</organismHost>